<organism>
    <name type="scientific">Shewanella halifaxensis (strain HAW-EB4)</name>
    <dbReference type="NCBI Taxonomy" id="458817"/>
    <lineage>
        <taxon>Bacteria</taxon>
        <taxon>Pseudomonadati</taxon>
        <taxon>Pseudomonadota</taxon>
        <taxon>Gammaproteobacteria</taxon>
        <taxon>Alteromonadales</taxon>
        <taxon>Shewanellaceae</taxon>
        <taxon>Shewanella</taxon>
    </lineage>
</organism>
<dbReference type="EMBL" id="CP000931">
    <property type="protein sequence ID" value="ABZ78838.1"/>
    <property type="molecule type" value="Genomic_DNA"/>
</dbReference>
<dbReference type="RefSeq" id="WP_012279342.1">
    <property type="nucleotide sequence ID" value="NC_010334.1"/>
</dbReference>
<dbReference type="SMR" id="B0TQF8"/>
<dbReference type="STRING" id="458817.Shal_4298"/>
<dbReference type="KEGG" id="shl:Shal_4298"/>
<dbReference type="eggNOG" id="COG0711">
    <property type="taxonomic scope" value="Bacteria"/>
</dbReference>
<dbReference type="HOGENOM" id="CLU_079215_4_5_6"/>
<dbReference type="OrthoDB" id="9788020at2"/>
<dbReference type="Proteomes" id="UP000001317">
    <property type="component" value="Chromosome"/>
</dbReference>
<dbReference type="GO" id="GO:0005886">
    <property type="term" value="C:plasma membrane"/>
    <property type="evidence" value="ECO:0007669"/>
    <property type="project" value="UniProtKB-SubCell"/>
</dbReference>
<dbReference type="GO" id="GO:0045259">
    <property type="term" value="C:proton-transporting ATP synthase complex"/>
    <property type="evidence" value="ECO:0007669"/>
    <property type="project" value="UniProtKB-KW"/>
</dbReference>
<dbReference type="GO" id="GO:0046933">
    <property type="term" value="F:proton-transporting ATP synthase activity, rotational mechanism"/>
    <property type="evidence" value="ECO:0007669"/>
    <property type="project" value="UniProtKB-UniRule"/>
</dbReference>
<dbReference type="GO" id="GO:0046961">
    <property type="term" value="F:proton-transporting ATPase activity, rotational mechanism"/>
    <property type="evidence" value="ECO:0007669"/>
    <property type="project" value="TreeGrafter"/>
</dbReference>
<dbReference type="CDD" id="cd06503">
    <property type="entry name" value="ATP-synt_Fo_b"/>
    <property type="match status" value="1"/>
</dbReference>
<dbReference type="FunFam" id="1.20.5.620:FF:000001">
    <property type="entry name" value="ATP synthase subunit b"/>
    <property type="match status" value="1"/>
</dbReference>
<dbReference type="Gene3D" id="1.20.5.620">
    <property type="entry name" value="F1F0 ATP synthase subunit B, membrane domain"/>
    <property type="match status" value="1"/>
</dbReference>
<dbReference type="HAMAP" id="MF_01398">
    <property type="entry name" value="ATP_synth_b_bprime"/>
    <property type="match status" value="1"/>
</dbReference>
<dbReference type="InterPro" id="IPR028987">
    <property type="entry name" value="ATP_synth_B-like_membr_sf"/>
</dbReference>
<dbReference type="InterPro" id="IPR002146">
    <property type="entry name" value="ATP_synth_b/b'su_bac/chlpt"/>
</dbReference>
<dbReference type="InterPro" id="IPR005864">
    <property type="entry name" value="ATP_synth_F0_bsu_bac"/>
</dbReference>
<dbReference type="InterPro" id="IPR050059">
    <property type="entry name" value="ATP_synthase_B_chain"/>
</dbReference>
<dbReference type="NCBIfam" id="TIGR01144">
    <property type="entry name" value="ATP_synt_b"/>
    <property type="match status" value="1"/>
</dbReference>
<dbReference type="NCBIfam" id="NF004411">
    <property type="entry name" value="PRK05759.1-2"/>
    <property type="match status" value="1"/>
</dbReference>
<dbReference type="NCBIfam" id="NF004413">
    <property type="entry name" value="PRK05759.1-4"/>
    <property type="match status" value="1"/>
</dbReference>
<dbReference type="PANTHER" id="PTHR33445:SF1">
    <property type="entry name" value="ATP SYNTHASE SUBUNIT B"/>
    <property type="match status" value="1"/>
</dbReference>
<dbReference type="PANTHER" id="PTHR33445">
    <property type="entry name" value="ATP SYNTHASE SUBUNIT B', CHLOROPLASTIC"/>
    <property type="match status" value="1"/>
</dbReference>
<dbReference type="Pfam" id="PF00430">
    <property type="entry name" value="ATP-synt_B"/>
    <property type="match status" value="1"/>
</dbReference>
<dbReference type="SUPFAM" id="SSF81573">
    <property type="entry name" value="F1F0 ATP synthase subunit B, membrane domain"/>
    <property type="match status" value="1"/>
</dbReference>
<comment type="function">
    <text evidence="1">F(1)F(0) ATP synthase produces ATP from ADP in the presence of a proton or sodium gradient. F-type ATPases consist of two structural domains, F(1) containing the extramembraneous catalytic core and F(0) containing the membrane proton channel, linked together by a central stalk and a peripheral stalk. During catalysis, ATP synthesis in the catalytic domain of F(1) is coupled via a rotary mechanism of the central stalk subunits to proton translocation.</text>
</comment>
<comment type="function">
    <text evidence="1">Component of the F(0) channel, it forms part of the peripheral stalk, linking F(1) to F(0).</text>
</comment>
<comment type="subunit">
    <text evidence="1">F-type ATPases have 2 components, F(1) - the catalytic core - and F(0) - the membrane proton channel. F(1) has five subunits: alpha(3), beta(3), gamma(1), delta(1), epsilon(1). F(0) has three main subunits: a(1), b(2) and c(10-14). The alpha and beta chains form an alternating ring which encloses part of the gamma chain. F(1) is attached to F(0) by a central stalk formed by the gamma and epsilon chains, while a peripheral stalk is formed by the delta and b chains.</text>
</comment>
<comment type="subcellular location">
    <subcellularLocation>
        <location evidence="1">Cell inner membrane</location>
        <topology evidence="1">Single-pass membrane protein</topology>
    </subcellularLocation>
</comment>
<comment type="similarity">
    <text evidence="1">Belongs to the ATPase B chain family.</text>
</comment>
<sequence>MSINATLLGQAISFLLFVWFCMKFVWPPLMNAIEERQKKIADGLADAGRAAKDLELAQVKATEQLKDAKATANEIIEQANKRKAQIVDEAKVEADTERAKIIAQGHAEIENERNRVKEDLRKQVAALAIAGAEKILERSIDEAAHSDIVNKLVAEL</sequence>
<protein>
    <recommendedName>
        <fullName evidence="1">ATP synthase subunit b</fullName>
    </recommendedName>
    <alternativeName>
        <fullName evidence="1">ATP synthase F(0) sector subunit b</fullName>
    </alternativeName>
    <alternativeName>
        <fullName evidence="1">ATPase subunit I</fullName>
    </alternativeName>
    <alternativeName>
        <fullName evidence="1">F-type ATPase subunit b</fullName>
        <shortName evidence="1">F-ATPase subunit b</shortName>
    </alternativeName>
</protein>
<reference key="1">
    <citation type="submission" date="2008-01" db="EMBL/GenBank/DDBJ databases">
        <title>Complete sequence of Shewanella halifaxensis HAW-EB4.</title>
        <authorList>
            <consortium name="US DOE Joint Genome Institute"/>
            <person name="Copeland A."/>
            <person name="Lucas S."/>
            <person name="Lapidus A."/>
            <person name="Glavina del Rio T."/>
            <person name="Dalin E."/>
            <person name="Tice H."/>
            <person name="Bruce D."/>
            <person name="Goodwin L."/>
            <person name="Pitluck S."/>
            <person name="Sims D."/>
            <person name="Brettin T."/>
            <person name="Detter J.C."/>
            <person name="Han C."/>
            <person name="Kuske C.R."/>
            <person name="Schmutz J."/>
            <person name="Larimer F."/>
            <person name="Land M."/>
            <person name="Hauser L."/>
            <person name="Kyrpides N."/>
            <person name="Kim E."/>
            <person name="Zhao J.-S."/>
            <person name="Richardson P."/>
        </authorList>
    </citation>
    <scope>NUCLEOTIDE SEQUENCE [LARGE SCALE GENOMIC DNA]</scope>
    <source>
        <strain>HAW-EB4</strain>
    </source>
</reference>
<feature type="chain" id="PRO_0000368759" description="ATP synthase subunit b">
    <location>
        <begin position="1"/>
        <end position="156"/>
    </location>
</feature>
<feature type="transmembrane region" description="Helical" evidence="1">
    <location>
        <begin position="7"/>
        <end position="29"/>
    </location>
</feature>
<gene>
    <name evidence="1" type="primary">atpF</name>
    <name type="ordered locus">Shal_4298</name>
</gene>
<accession>B0TQF8</accession>
<keyword id="KW-0066">ATP synthesis</keyword>
<keyword id="KW-0997">Cell inner membrane</keyword>
<keyword id="KW-1003">Cell membrane</keyword>
<keyword id="KW-0138">CF(0)</keyword>
<keyword id="KW-0375">Hydrogen ion transport</keyword>
<keyword id="KW-0406">Ion transport</keyword>
<keyword id="KW-0472">Membrane</keyword>
<keyword id="KW-0812">Transmembrane</keyword>
<keyword id="KW-1133">Transmembrane helix</keyword>
<keyword id="KW-0813">Transport</keyword>
<name>ATPF_SHEHH</name>
<evidence type="ECO:0000255" key="1">
    <source>
        <dbReference type="HAMAP-Rule" id="MF_01398"/>
    </source>
</evidence>
<proteinExistence type="inferred from homology"/>